<evidence type="ECO:0000255" key="1">
    <source>
        <dbReference type="HAMAP-Rule" id="MF_01580"/>
    </source>
</evidence>
<protein>
    <recommendedName>
        <fullName evidence="1">Cell division activator CedA</fullName>
    </recommendedName>
</protein>
<reference key="1">
    <citation type="journal article" date="2008" name="J. Bacteriol.">
        <title>Insights into the environmental resistance gene pool from the genome sequence of the multidrug-resistant environmental isolate Escherichia coli SMS-3-5.</title>
        <authorList>
            <person name="Fricke W.F."/>
            <person name="Wright M.S."/>
            <person name="Lindell A.H."/>
            <person name="Harkins D.M."/>
            <person name="Baker-Austin C."/>
            <person name="Ravel J."/>
            <person name="Stepanauskas R."/>
        </authorList>
    </citation>
    <scope>NUCLEOTIDE SEQUENCE [LARGE SCALE GENOMIC DNA]</scope>
    <source>
        <strain>SMS-3-5 / SECEC</strain>
    </source>
</reference>
<accession>B1LE00</accession>
<comment type="function">
    <text evidence="1">Activates the cell division inhibited by chromosomal DNA over-replication.</text>
</comment>
<comment type="similarity">
    <text evidence="1">Belongs to the CedA family.</text>
</comment>
<dbReference type="EMBL" id="CP000970">
    <property type="protein sequence ID" value="ACB16930.1"/>
    <property type="molecule type" value="Genomic_DNA"/>
</dbReference>
<dbReference type="BMRB" id="B1LE00"/>
<dbReference type="SMR" id="B1LE00"/>
<dbReference type="KEGG" id="ecm:EcSMS35_1460"/>
<dbReference type="HOGENOM" id="CLU_167445_0_0_6"/>
<dbReference type="Proteomes" id="UP000007011">
    <property type="component" value="Chromosome"/>
</dbReference>
<dbReference type="GO" id="GO:0003677">
    <property type="term" value="F:DNA binding"/>
    <property type="evidence" value="ECO:0007669"/>
    <property type="project" value="UniProtKB-UniRule"/>
</dbReference>
<dbReference type="GO" id="GO:0051301">
    <property type="term" value="P:cell division"/>
    <property type="evidence" value="ECO:0007669"/>
    <property type="project" value="UniProtKB-UniRule"/>
</dbReference>
<dbReference type="Gene3D" id="3.30.730.20">
    <property type="entry name" value="Cell division activator CedA"/>
    <property type="match status" value="1"/>
</dbReference>
<dbReference type="HAMAP" id="MF_01580">
    <property type="entry name" value="CedA"/>
    <property type="match status" value="1"/>
</dbReference>
<dbReference type="InterPro" id="IPR038463">
    <property type="entry name" value="CedA-like_sf"/>
</dbReference>
<dbReference type="InterPro" id="IPR019666">
    <property type="entry name" value="Cell_div_activator_CedA"/>
</dbReference>
<dbReference type="NCBIfam" id="NF007510">
    <property type="entry name" value="PRK10113.1"/>
    <property type="match status" value="1"/>
</dbReference>
<dbReference type="Pfam" id="PF10729">
    <property type="entry name" value="CedA"/>
    <property type="match status" value="1"/>
</dbReference>
<sequence length="80" mass="9409">MKKPLRQQNRQIISYIPRTEPAPPEHAIKMDSFRDVWMLRGKYVAFVLMGESFMRSPAFTVPESAQRWANQIRQEGEVTE</sequence>
<proteinExistence type="inferred from homology"/>
<organism>
    <name type="scientific">Escherichia coli (strain SMS-3-5 / SECEC)</name>
    <dbReference type="NCBI Taxonomy" id="439855"/>
    <lineage>
        <taxon>Bacteria</taxon>
        <taxon>Pseudomonadati</taxon>
        <taxon>Pseudomonadota</taxon>
        <taxon>Gammaproteobacteria</taxon>
        <taxon>Enterobacterales</taxon>
        <taxon>Enterobacteriaceae</taxon>
        <taxon>Escherichia</taxon>
    </lineage>
</organism>
<feature type="chain" id="PRO_1000200988" description="Cell division activator CedA">
    <location>
        <begin position="1"/>
        <end position="80"/>
    </location>
</feature>
<gene>
    <name evidence="1" type="primary">cedA</name>
    <name type="ordered locus">EcSMS35_1460</name>
</gene>
<name>CEDA_ECOSM</name>
<keyword id="KW-0131">Cell cycle</keyword>
<keyword id="KW-0132">Cell division</keyword>
<keyword id="KW-0238">DNA-binding</keyword>